<dbReference type="EMBL" id="AB086179">
    <property type="protein sequence ID" value="BAC55346.1"/>
    <property type="molecule type" value="Genomic_DNA"/>
</dbReference>
<dbReference type="EMBL" id="AB087438">
    <property type="protein sequence ID" value="BAC55439.1"/>
    <property type="molecule type" value="mRNA"/>
</dbReference>
<dbReference type="RefSeq" id="NP_777410.1">
    <property type="nucleotide sequence ID" value="NC_004543.1"/>
</dbReference>
<dbReference type="SMR" id="P59705"/>
<dbReference type="GeneID" id="2553410"/>
<dbReference type="GO" id="GO:0009535">
    <property type="term" value="C:chloroplast thylakoid membrane"/>
    <property type="evidence" value="ECO:0007669"/>
    <property type="project" value="UniProtKB-SubCell"/>
</dbReference>
<dbReference type="GO" id="GO:0009539">
    <property type="term" value="C:photosystem II reaction center"/>
    <property type="evidence" value="ECO:0007669"/>
    <property type="project" value="InterPro"/>
</dbReference>
<dbReference type="GO" id="GO:0015979">
    <property type="term" value="P:photosynthesis"/>
    <property type="evidence" value="ECO:0007669"/>
    <property type="project" value="UniProtKB-UniRule"/>
</dbReference>
<dbReference type="GO" id="GO:0042549">
    <property type="term" value="P:photosystem II stabilization"/>
    <property type="evidence" value="ECO:0007669"/>
    <property type="project" value="InterPro"/>
</dbReference>
<dbReference type="FunFam" id="1.10.287.740:FF:000001">
    <property type="entry name" value="Photosystem II reaction center protein Z"/>
    <property type="match status" value="1"/>
</dbReference>
<dbReference type="Gene3D" id="1.10.287.740">
    <property type="entry name" value="Photosystem II PsbZ, reaction centre"/>
    <property type="match status" value="1"/>
</dbReference>
<dbReference type="HAMAP" id="MF_00644">
    <property type="entry name" value="PSII_PsbZ"/>
    <property type="match status" value="1"/>
</dbReference>
<dbReference type="InterPro" id="IPR002644">
    <property type="entry name" value="PSII_PsbZ"/>
</dbReference>
<dbReference type="InterPro" id="IPR036512">
    <property type="entry name" value="PSII_PsbZ_sf"/>
</dbReference>
<dbReference type="NCBIfam" id="TIGR03043">
    <property type="entry name" value="PS_II_psbZ"/>
    <property type="match status" value="1"/>
</dbReference>
<dbReference type="PANTHER" id="PTHR34971">
    <property type="entry name" value="PHOTOSYSTEM II REACTION CENTER PROTEIN Z"/>
    <property type="match status" value="1"/>
</dbReference>
<dbReference type="PANTHER" id="PTHR34971:SF2">
    <property type="entry name" value="PHOTOSYSTEM II REACTION CENTER PROTEIN Z"/>
    <property type="match status" value="1"/>
</dbReference>
<dbReference type="Pfam" id="PF01737">
    <property type="entry name" value="Ycf9"/>
    <property type="match status" value="1"/>
</dbReference>
<dbReference type="SUPFAM" id="SSF161055">
    <property type="entry name" value="PsbZ-like"/>
    <property type="match status" value="1"/>
</dbReference>
<sequence length="62" mass="6458">MTIAFQLAVFALIATSFLLVIGVPVVLASPDGWSSSKNAVFSGASLWIGLVFLVGILNSFIS</sequence>
<proteinExistence type="evidence at transcript level"/>
<evidence type="ECO:0000255" key="1">
    <source>
        <dbReference type="HAMAP-Rule" id="MF_00644"/>
    </source>
</evidence>
<comment type="function">
    <text evidence="1">May control the interaction of photosystem II (PSII) cores with the light-harvesting antenna, regulates electron flow through the 2 photosystem reaction centers. PSII is a light-driven water plastoquinone oxidoreductase, using light energy to abstract electrons from H(2)O, generating a proton gradient subsequently used for ATP formation.</text>
</comment>
<comment type="subunit">
    <text evidence="1">PSII is composed of 1 copy each of membrane proteins PsbA, PsbB, PsbC, PsbD, PsbE, PsbF, PsbH, PsbI, PsbJ, PsbK, PsbL, PsbM, PsbT, PsbY, PsbZ, Psb30/Ycf12, at least 3 peripheral proteins of the oxygen-evolving complex and a large number of cofactors. It forms dimeric complexes.</text>
</comment>
<comment type="subcellular location">
    <subcellularLocation>
        <location evidence="1">Plastid</location>
        <location evidence="1">Chloroplast thylakoid membrane</location>
        <topology evidence="1">Multi-pass membrane protein</topology>
    </subcellularLocation>
</comment>
<comment type="similarity">
    <text evidence="1">Belongs to the PsbZ family.</text>
</comment>
<keyword id="KW-0150">Chloroplast</keyword>
<keyword id="KW-0472">Membrane</keyword>
<keyword id="KW-0602">Photosynthesis</keyword>
<keyword id="KW-0604">Photosystem II</keyword>
<keyword id="KW-0934">Plastid</keyword>
<keyword id="KW-0674">Reaction center</keyword>
<keyword id="KW-0793">Thylakoid</keyword>
<keyword id="KW-0812">Transmembrane</keyword>
<keyword id="KW-1133">Transmembrane helix</keyword>
<name>PSBZ_ANTAG</name>
<reference key="1">
    <citation type="journal article" date="2003" name="Nucleic Acids Res.">
        <title>The complete nucleotide sequence of the hornwort (Anthoceros formosae) chloroplast genome: insight into the earliest land plants.</title>
        <authorList>
            <person name="Kugita M."/>
            <person name="Kaneko A."/>
            <person name="Yamamoto Y."/>
            <person name="Takeya Y."/>
            <person name="Matsumoto T."/>
            <person name="Yoshinaga K."/>
        </authorList>
    </citation>
    <scope>NUCLEOTIDE SEQUENCE [LARGE SCALE GENOMIC DNA]</scope>
</reference>
<reference key="2">
    <citation type="journal article" date="2003" name="Nucleic Acids Res.">
        <title>RNA editing in hornwort chloroplasts makes more than half the genes functional.</title>
        <authorList>
            <person name="Kugita M."/>
            <person name="Yamamoto Y."/>
            <person name="Fujikawa T."/>
            <person name="Matsumoto T."/>
            <person name="Yoshinaga K."/>
        </authorList>
    </citation>
    <scope>NUCLEOTIDE SEQUENCE [MRNA]</scope>
    <scope>ABSENCE OF RNA EDITING</scope>
    <source>
        <tissue>Thallus</tissue>
    </source>
</reference>
<protein>
    <recommendedName>
        <fullName evidence="1">Photosystem II reaction center protein Z</fullName>
        <shortName evidence="1">PSII-Z</shortName>
    </recommendedName>
</protein>
<organism>
    <name type="scientific">Anthoceros angustus</name>
    <name type="common">Hornwort</name>
    <name type="synonym">Anthoceros formosae</name>
    <dbReference type="NCBI Taxonomy" id="48387"/>
    <lineage>
        <taxon>Eukaryota</taxon>
        <taxon>Viridiplantae</taxon>
        <taxon>Streptophyta</taxon>
        <taxon>Embryophyta</taxon>
        <taxon>Anthocerotophyta</taxon>
        <taxon>Anthocerotopsida</taxon>
        <taxon>Anthocerotidae</taxon>
        <taxon>Anthocerotales</taxon>
        <taxon>Anthocerotaceae</taxon>
        <taxon>Anthoceros</taxon>
    </lineage>
</organism>
<geneLocation type="chloroplast"/>
<gene>
    <name evidence="1" type="primary">psbZ</name>
</gene>
<feature type="chain" id="PRO_0000217688" description="Photosystem II reaction center protein Z">
    <location>
        <begin position="1"/>
        <end position="62"/>
    </location>
</feature>
<feature type="transmembrane region" description="Helical" evidence="1">
    <location>
        <begin position="8"/>
        <end position="28"/>
    </location>
</feature>
<feature type="transmembrane region" description="Helical" evidence="1">
    <location>
        <begin position="41"/>
        <end position="61"/>
    </location>
</feature>
<accession>P59705</accession>